<comment type="function">
    <text evidence="1">Specifically methylates guanosine-37 in various tRNAs.</text>
</comment>
<comment type="catalytic activity">
    <reaction evidence="1">
        <text>guanosine(37) in tRNA + S-adenosyl-L-methionine = N(1)-methylguanosine(37) in tRNA + S-adenosyl-L-homocysteine + H(+)</text>
        <dbReference type="Rhea" id="RHEA:36899"/>
        <dbReference type="Rhea" id="RHEA-COMP:10145"/>
        <dbReference type="Rhea" id="RHEA-COMP:10147"/>
        <dbReference type="ChEBI" id="CHEBI:15378"/>
        <dbReference type="ChEBI" id="CHEBI:57856"/>
        <dbReference type="ChEBI" id="CHEBI:59789"/>
        <dbReference type="ChEBI" id="CHEBI:73542"/>
        <dbReference type="ChEBI" id="CHEBI:74269"/>
        <dbReference type="EC" id="2.1.1.228"/>
    </reaction>
</comment>
<comment type="subunit">
    <text evidence="1">Homodimer.</text>
</comment>
<comment type="subcellular location">
    <subcellularLocation>
        <location evidence="1">Cytoplasm</location>
    </subcellularLocation>
</comment>
<comment type="similarity">
    <text evidence="1">Belongs to the RNA methyltransferase TrmD family.</text>
</comment>
<gene>
    <name evidence="1" type="primary">trmD</name>
    <name type="ordered locus">ECUMN_2932</name>
</gene>
<sequence length="255" mass="28422">MWIGIISLFPEMFRAITDYGVTGRAVKNGLLSIQSWSPRDFTHDRHRTVDDRPYGGGPGMLMMVQPLRDAIHAAKAAAGEGAKVIYLSPQGRKLDQAGVSELATNQKLILVCGRYEGIDERVIQTEIDEEWSIGDYVLSGGELPAMTLIDSVSRFIPGVLGHEASATEDSFAEGLLDCPHYTRPEVLEGMEVPPVLLSGNHAEIRRWRLKQSLGRTWLRRPELLENLALTEEQARLLAEFKTEHAQQQHKHDGMA</sequence>
<dbReference type="EC" id="2.1.1.228" evidence="1"/>
<dbReference type="EMBL" id="CU928163">
    <property type="protein sequence ID" value="CAR14103.1"/>
    <property type="molecule type" value="Genomic_DNA"/>
</dbReference>
<dbReference type="RefSeq" id="WP_000264777.1">
    <property type="nucleotide sequence ID" value="NC_011751.1"/>
</dbReference>
<dbReference type="RefSeq" id="YP_002413627.1">
    <property type="nucleotide sequence ID" value="NC_011751.1"/>
</dbReference>
<dbReference type="SMR" id="B7N6J3"/>
<dbReference type="STRING" id="585056.ECUMN_2932"/>
<dbReference type="GeneID" id="93774457"/>
<dbReference type="KEGG" id="eum:ECUMN_2932"/>
<dbReference type="PATRIC" id="fig|585056.7.peg.3113"/>
<dbReference type="HOGENOM" id="CLU_047363_0_1_6"/>
<dbReference type="Proteomes" id="UP000007097">
    <property type="component" value="Chromosome"/>
</dbReference>
<dbReference type="GO" id="GO:0005829">
    <property type="term" value="C:cytosol"/>
    <property type="evidence" value="ECO:0007669"/>
    <property type="project" value="TreeGrafter"/>
</dbReference>
<dbReference type="GO" id="GO:0052906">
    <property type="term" value="F:tRNA (guanine(37)-N1)-methyltransferase activity"/>
    <property type="evidence" value="ECO:0007669"/>
    <property type="project" value="UniProtKB-UniRule"/>
</dbReference>
<dbReference type="GO" id="GO:0002939">
    <property type="term" value="P:tRNA N1-guanine methylation"/>
    <property type="evidence" value="ECO:0007669"/>
    <property type="project" value="TreeGrafter"/>
</dbReference>
<dbReference type="CDD" id="cd18080">
    <property type="entry name" value="TrmD-like"/>
    <property type="match status" value="1"/>
</dbReference>
<dbReference type="FunFam" id="1.10.1270.20:FF:000001">
    <property type="entry name" value="tRNA (guanine-N(1)-)-methyltransferase"/>
    <property type="match status" value="1"/>
</dbReference>
<dbReference type="FunFam" id="3.40.1280.10:FF:000001">
    <property type="entry name" value="tRNA (guanine-N(1)-)-methyltransferase"/>
    <property type="match status" value="1"/>
</dbReference>
<dbReference type="Gene3D" id="3.40.1280.10">
    <property type="match status" value="1"/>
</dbReference>
<dbReference type="Gene3D" id="1.10.1270.20">
    <property type="entry name" value="tRNA(m1g37)methyltransferase, domain 2"/>
    <property type="match status" value="1"/>
</dbReference>
<dbReference type="HAMAP" id="MF_00605">
    <property type="entry name" value="TrmD"/>
    <property type="match status" value="1"/>
</dbReference>
<dbReference type="InterPro" id="IPR029028">
    <property type="entry name" value="Alpha/beta_knot_MTases"/>
</dbReference>
<dbReference type="InterPro" id="IPR023148">
    <property type="entry name" value="tRNA_m1G_MeTrfase_C_sf"/>
</dbReference>
<dbReference type="InterPro" id="IPR002649">
    <property type="entry name" value="tRNA_m1G_MeTrfase_TrmD"/>
</dbReference>
<dbReference type="InterPro" id="IPR029026">
    <property type="entry name" value="tRNA_m1G_MTases_N"/>
</dbReference>
<dbReference type="InterPro" id="IPR016009">
    <property type="entry name" value="tRNA_MeTrfase_TRMD/TRM10"/>
</dbReference>
<dbReference type="NCBIfam" id="NF000648">
    <property type="entry name" value="PRK00026.1"/>
    <property type="match status" value="1"/>
</dbReference>
<dbReference type="NCBIfam" id="TIGR00088">
    <property type="entry name" value="trmD"/>
    <property type="match status" value="1"/>
</dbReference>
<dbReference type="PANTHER" id="PTHR46417">
    <property type="entry name" value="TRNA (GUANINE-N(1)-)-METHYLTRANSFERASE"/>
    <property type="match status" value="1"/>
</dbReference>
<dbReference type="PANTHER" id="PTHR46417:SF1">
    <property type="entry name" value="TRNA (GUANINE-N(1)-)-METHYLTRANSFERASE"/>
    <property type="match status" value="1"/>
</dbReference>
<dbReference type="Pfam" id="PF01746">
    <property type="entry name" value="tRNA_m1G_MT"/>
    <property type="match status" value="1"/>
</dbReference>
<dbReference type="PIRSF" id="PIRSF000386">
    <property type="entry name" value="tRNA_mtase"/>
    <property type="match status" value="1"/>
</dbReference>
<dbReference type="SUPFAM" id="SSF75217">
    <property type="entry name" value="alpha/beta knot"/>
    <property type="match status" value="1"/>
</dbReference>
<keyword id="KW-0963">Cytoplasm</keyword>
<keyword id="KW-0489">Methyltransferase</keyword>
<keyword id="KW-0949">S-adenosyl-L-methionine</keyword>
<keyword id="KW-0808">Transferase</keyword>
<keyword id="KW-0819">tRNA processing</keyword>
<reference key="1">
    <citation type="journal article" date="2009" name="PLoS Genet.">
        <title>Organised genome dynamics in the Escherichia coli species results in highly diverse adaptive paths.</title>
        <authorList>
            <person name="Touchon M."/>
            <person name="Hoede C."/>
            <person name="Tenaillon O."/>
            <person name="Barbe V."/>
            <person name="Baeriswyl S."/>
            <person name="Bidet P."/>
            <person name="Bingen E."/>
            <person name="Bonacorsi S."/>
            <person name="Bouchier C."/>
            <person name="Bouvet O."/>
            <person name="Calteau A."/>
            <person name="Chiapello H."/>
            <person name="Clermont O."/>
            <person name="Cruveiller S."/>
            <person name="Danchin A."/>
            <person name="Diard M."/>
            <person name="Dossat C."/>
            <person name="Karoui M.E."/>
            <person name="Frapy E."/>
            <person name="Garry L."/>
            <person name="Ghigo J.M."/>
            <person name="Gilles A.M."/>
            <person name="Johnson J."/>
            <person name="Le Bouguenec C."/>
            <person name="Lescat M."/>
            <person name="Mangenot S."/>
            <person name="Martinez-Jehanne V."/>
            <person name="Matic I."/>
            <person name="Nassif X."/>
            <person name="Oztas S."/>
            <person name="Petit M.A."/>
            <person name="Pichon C."/>
            <person name="Rouy Z."/>
            <person name="Ruf C.S."/>
            <person name="Schneider D."/>
            <person name="Tourret J."/>
            <person name="Vacherie B."/>
            <person name="Vallenet D."/>
            <person name="Medigue C."/>
            <person name="Rocha E.P.C."/>
            <person name="Denamur E."/>
        </authorList>
    </citation>
    <scope>NUCLEOTIDE SEQUENCE [LARGE SCALE GENOMIC DNA]</scope>
    <source>
        <strain>UMN026 / ExPEC</strain>
    </source>
</reference>
<protein>
    <recommendedName>
        <fullName evidence="1">tRNA (guanine-N(1)-)-methyltransferase</fullName>
        <ecNumber evidence="1">2.1.1.228</ecNumber>
    </recommendedName>
    <alternativeName>
        <fullName evidence="1">M1G-methyltransferase</fullName>
    </alternativeName>
    <alternativeName>
        <fullName evidence="1">tRNA [GM37] methyltransferase</fullName>
    </alternativeName>
</protein>
<organism>
    <name type="scientific">Escherichia coli O17:K52:H18 (strain UMN026 / ExPEC)</name>
    <dbReference type="NCBI Taxonomy" id="585056"/>
    <lineage>
        <taxon>Bacteria</taxon>
        <taxon>Pseudomonadati</taxon>
        <taxon>Pseudomonadota</taxon>
        <taxon>Gammaproteobacteria</taxon>
        <taxon>Enterobacterales</taxon>
        <taxon>Enterobacteriaceae</taxon>
        <taxon>Escherichia</taxon>
    </lineage>
</organism>
<evidence type="ECO:0000255" key="1">
    <source>
        <dbReference type="HAMAP-Rule" id="MF_00605"/>
    </source>
</evidence>
<feature type="chain" id="PRO_1000130168" description="tRNA (guanine-N(1)-)-methyltransferase">
    <location>
        <begin position="1"/>
        <end position="255"/>
    </location>
</feature>
<feature type="binding site" evidence="1">
    <location>
        <position position="113"/>
    </location>
    <ligand>
        <name>S-adenosyl-L-methionine</name>
        <dbReference type="ChEBI" id="CHEBI:59789"/>
    </ligand>
</feature>
<feature type="binding site" evidence="1">
    <location>
        <begin position="133"/>
        <end position="138"/>
    </location>
    <ligand>
        <name>S-adenosyl-L-methionine</name>
        <dbReference type="ChEBI" id="CHEBI:59789"/>
    </ligand>
</feature>
<name>TRMD_ECOLU</name>
<proteinExistence type="inferred from homology"/>
<accession>B7N6J3</accession>